<dbReference type="EC" id="1.1.5.5" evidence="6 7 9"/>
<dbReference type="EMBL" id="D86375">
    <property type="protein sequence ID" value="BAA19753.1"/>
    <property type="molecule type" value="Genomic_DNA"/>
</dbReference>
<dbReference type="EMBL" id="CP000009">
    <property type="protein sequence ID" value="AAW60837.1"/>
    <property type="molecule type" value="Genomic_DNA"/>
</dbReference>
<dbReference type="RefSeq" id="WP_011252629.1">
    <property type="nucleotide sequence ID" value="NC_006677.1"/>
</dbReference>
<dbReference type="PDB" id="8GY2">
    <property type="method" value="EM"/>
    <property type="resolution" value="2.50 A"/>
    <property type="chains" value="A=1-757"/>
</dbReference>
<dbReference type="PDBsum" id="8GY2"/>
<dbReference type="EMDB" id="EMD-34368"/>
<dbReference type="SMR" id="O05542"/>
<dbReference type="STRING" id="290633.GOX1068"/>
<dbReference type="KEGG" id="gox:GOX1068"/>
<dbReference type="eggNOG" id="COG2010">
    <property type="taxonomic scope" value="Bacteria"/>
</dbReference>
<dbReference type="eggNOG" id="COG4993">
    <property type="taxonomic scope" value="Bacteria"/>
</dbReference>
<dbReference type="HOGENOM" id="CLU_018478_0_1_5"/>
<dbReference type="BioCyc" id="MetaCyc:MONOMER-15242"/>
<dbReference type="Proteomes" id="UP000006375">
    <property type="component" value="Chromosome"/>
</dbReference>
<dbReference type="GO" id="GO:0030288">
    <property type="term" value="C:outer membrane-bounded periplasmic space"/>
    <property type="evidence" value="ECO:0007669"/>
    <property type="project" value="InterPro"/>
</dbReference>
<dbReference type="GO" id="GO:0005886">
    <property type="term" value="C:plasma membrane"/>
    <property type="evidence" value="ECO:0007669"/>
    <property type="project" value="UniProtKB-SubCell"/>
</dbReference>
<dbReference type="GO" id="GO:0005509">
    <property type="term" value="F:calcium ion binding"/>
    <property type="evidence" value="ECO:0007669"/>
    <property type="project" value="InterPro"/>
</dbReference>
<dbReference type="GO" id="GO:0009055">
    <property type="term" value="F:electron transfer activity"/>
    <property type="evidence" value="ECO:0007669"/>
    <property type="project" value="InterPro"/>
</dbReference>
<dbReference type="GO" id="GO:0020037">
    <property type="term" value="F:heme binding"/>
    <property type="evidence" value="ECO:0007669"/>
    <property type="project" value="InterPro"/>
</dbReference>
<dbReference type="GO" id="GO:0016614">
    <property type="term" value="F:oxidoreductase activity, acting on CH-OH group of donors"/>
    <property type="evidence" value="ECO:0007669"/>
    <property type="project" value="InterPro"/>
</dbReference>
<dbReference type="CDD" id="cd10279">
    <property type="entry name" value="PQQ_ADH_II"/>
    <property type="match status" value="1"/>
</dbReference>
<dbReference type="Gene3D" id="1.10.760.10">
    <property type="entry name" value="Cytochrome c-like domain"/>
    <property type="match status" value="1"/>
</dbReference>
<dbReference type="Gene3D" id="2.140.10.10">
    <property type="entry name" value="Quinoprotein alcohol dehydrogenase-like superfamily"/>
    <property type="match status" value="1"/>
</dbReference>
<dbReference type="InterPro" id="IPR009056">
    <property type="entry name" value="Cyt_c-like_dom"/>
</dbReference>
<dbReference type="InterPro" id="IPR036909">
    <property type="entry name" value="Cyt_c-like_dom_sf"/>
</dbReference>
<dbReference type="InterPro" id="IPR018391">
    <property type="entry name" value="PQQ_b-propeller_rpt"/>
</dbReference>
<dbReference type="InterPro" id="IPR017512">
    <property type="entry name" value="PQQ_MeOH/EtOH_DH"/>
</dbReference>
<dbReference type="InterPro" id="IPR002372">
    <property type="entry name" value="PQQ_rpt_dom"/>
</dbReference>
<dbReference type="InterPro" id="IPR011047">
    <property type="entry name" value="Quinoprotein_ADH-like_sf"/>
</dbReference>
<dbReference type="InterPro" id="IPR001479">
    <property type="entry name" value="Quinoprotein_DH_CS"/>
</dbReference>
<dbReference type="NCBIfam" id="TIGR03075">
    <property type="entry name" value="PQQ_enz_alc_DH"/>
    <property type="match status" value="1"/>
</dbReference>
<dbReference type="PANTHER" id="PTHR32303">
    <property type="entry name" value="QUINOPROTEIN ALCOHOL DEHYDROGENASE (CYTOCHROME C)"/>
    <property type="match status" value="1"/>
</dbReference>
<dbReference type="Pfam" id="PF01011">
    <property type="entry name" value="PQQ"/>
    <property type="match status" value="2"/>
</dbReference>
<dbReference type="SMART" id="SM00564">
    <property type="entry name" value="PQQ"/>
    <property type="match status" value="6"/>
</dbReference>
<dbReference type="SUPFAM" id="SSF46626">
    <property type="entry name" value="Cytochrome c"/>
    <property type="match status" value="1"/>
</dbReference>
<dbReference type="SUPFAM" id="SSF50998">
    <property type="entry name" value="Quinoprotein alcohol dehydrogenase-like"/>
    <property type="match status" value="1"/>
</dbReference>
<dbReference type="PROSITE" id="PS00363">
    <property type="entry name" value="BACTERIAL_PQQ_1"/>
    <property type="match status" value="1"/>
</dbReference>
<dbReference type="PROSITE" id="PS00364">
    <property type="entry name" value="BACTERIAL_PQQ_2"/>
    <property type="match status" value="1"/>
</dbReference>
<dbReference type="PROSITE" id="PS51007">
    <property type="entry name" value="CYTC"/>
    <property type="match status" value="1"/>
</dbReference>
<protein>
    <recommendedName>
        <fullName evidence="11">Alcohol dehydrogenase (quinone), dehydrogenase subunit</fullName>
        <shortName evidence="11">ADH</shortName>
        <ecNumber evidence="6 7 9">1.1.5.5</ecNumber>
    </recommendedName>
    <alternativeName>
        <fullName evidence="13">Alcohol dehydrogenase (quinone), acceptor subunit</fullName>
    </alternativeName>
    <alternativeName>
        <fullName evidence="11">Alcohol dehydrogenase (quinone), subunit I</fullName>
    </alternativeName>
    <alternativeName>
        <fullName evidence="12">Ethanol:Q2 reductase</fullName>
    </alternativeName>
    <alternativeName>
        <fullName evidence="11">G3-ADH subunit I</fullName>
    </alternativeName>
    <alternativeName>
        <fullName evidence="11">Quinohemoprotein alcohol dehydrogenase</fullName>
    </alternativeName>
    <alternativeName>
        <fullName evidence="10">Quinohemoprotein-cytochrome c complex</fullName>
    </alternativeName>
    <alternativeName>
        <fullName evidence="12">Ubiquinol oxidase</fullName>
    </alternativeName>
</protein>
<keyword id="KW-0002">3D-structure</keyword>
<keyword id="KW-0106">Calcium</keyword>
<keyword id="KW-1003">Cell membrane</keyword>
<keyword id="KW-0903">Direct protein sequencing</keyword>
<keyword id="KW-1015">Disulfide bond</keyword>
<keyword id="KW-0249">Electron transport</keyword>
<keyword id="KW-0349">Heme</keyword>
<keyword id="KW-0408">Iron</keyword>
<keyword id="KW-0472">Membrane</keyword>
<keyword id="KW-0479">Metal-binding</keyword>
<keyword id="KW-0560">Oxidoreductase</keyword>
<keyword id="KW-0634">PQQ</keyword>
<keyword id="KW-0873">Pyrrolidone carboxylic acid</keyword>
<keyword id="KW-1185">Reference proteome</keyword>
<keyword id="KW-0679">Respiratory chain</keyword>
<keyword id="KW-0732">Signal</keyword>
<keyword id="KW-0813">Transport</keyword>
<evidence type="ECO:0000250" key="1">
    <source>
        <dbReference type="UniProtKB" id="Q8GR64"/>
    </source>
</evidence>
<evidence type="ECO:0000255" key="2">
    <source>
        <dbReference type="PROSITE-ProRule" id="PRU00433"/>
    </source>
</evidence>
<evidence type="ECO:0000256" key="3">
    <source>
        <dbReference type="SAM" id="MobiDB-lite"/>
    </source>
</evidence>
<evidence type="ECO:0000269" key="4">
    <source>
    </source>
</evidence>
<evidence type="ECO:0000269" key="5">
    <source>
    </source>
</evidence>
<evidence type="ECO:0000269" key="6">
    <source>
    </source>
</evidence>
<evidence type="ECO:0000269" key="7">
    <source>
    </source>
</evidence>
<evidence type="ECO:0000269" key="8">
    <source>
    </source>
</evidence>
<evidence type="ECO:0000269" key="9">
    <source>
    </source>
</evidence>
<evidence type="ECO:0000303" key="10">
    <source>
    </source>
</evidence>
<evidence type="ECO:0000303" key="11">
    <source>
    </source>
</evidence>
<evidence type="ECO:0000303" key="12">
    <source>
    </source>
</evidence>
<evidence type="ECO:0000305" key="13"/>
<evidence type="ECO:0000305" key="14">
    <source>
    </source>
</evidence>
<evidence type="ECO:0000305" key="15">
    <source>
    </source>
</evidence>
<evidence type="ECO:0000305" key="16">
    <source>
    </source>
</evidence>
<evidence type="ECO:0000305" key="17">
    <source>
    </source>
</evidence>
<proteinExistence type="evidence at protein level"/>
<name>ADHA_GLUOX</name>
<organism>
    <name type="scientific">Gluconobacter oxydans (strain 621H)</name>
    <name type="common">Gluconobacter suboxydans</name>
    <dbReference type="NCBI Taxonomy" id="290633"/>
    <lineage>
        <taxon>Bacteria</taxon>
        <taxon>Pseudomonadati</taxon>
        <taxon>Pseudomonadota</taxon>
        <taxon>Alphaproteobacteria</taxon>
        <taxon>Acetobacterales</taxon>
        <taxon>Acetobacteraceae</taxon>
        <taxon>Gluconobacter</taxon>
    </lineage>
</organism>
<gene>
    <name evidence="11" type="primary">adhA</name>
    <name type="ordered locus">GOX1068</name>
</gene>
<feature type="signal peptide" evidence="8">
    <location>
        <begin position="1"/>
        <end position="34"/>
    </location>
</feature>
<feature type="chain" id="PRO_0000025562" description="Alcohol dehydrogenase (quinone), dehydrogenase subunit">
    <location>
        <begin position="35"/>
        <end position="757"/>
    </location>
</feature>
<feature type="domain" description="Cytochrome c" evidence="2">
    <location>
        <begin position="640"/>
        <end position="719"/>
    </location>
</feature>
<feature type="region of interest" description="Disordered" evidence="3">
    <location>
        <begin position="726"/>
        <end position="757"/>
    </location>
</feature>
<feature type="compositionally biased region" description="Polar residues" evidence="3">
    <location>
        <begin position="732"/>
        <end position="750"/>
    </location>
</feature>
<feature type="active site" description="Proton acceptor" evidence="1">
    <location>
        <position position="342"/>
    </location>
</feature>
<feature type="binding site" evidence="1">
    <location>
        <position position="95"/>
    </location>
    <ligand>
        <name>pyrroloquinoline quinone</name>
        <dbReference type="ChEBI" id="CHEBI:58442"/>
    </ligand>
</feature>
<feature type="binding site" evidence="1">
    <location>
        <position position="147"/>
    </location>
    <ligand>
        <name>pyrroloquinoline quinone</name>
        <dbReference type="ChEBI" id="CHEBI:58442"/>
    </ligand>
</feature>
<feature type="binding site" evidence="1">
    <location>
        <position position="215"/>
    </location>
    <ligand>
        <name>Ca(2+)</name>
        <dbReference type="ChEBI" id="CHEBI:29108"/>
    </ligand>
</feature>
<feature type="binding site" evidence="1">
    <location>
        <position position="277"/>
    </location>
    <ligand>
        <name>pyrroloquinoline quinone</name>
        <dbReference type="ChEBI" id="CHEBI:58442"/>
    </ligand>
</feature>
<feature type="binding site" evidence="1">
    <location>
        <position position="297"/>
    </location>
    <ligand>
        <name>Ca(2+)</name>
        <dbReference type="ChEBI" id="CHEBI:29108"/>
    </ligand>
</feature>
<feature type="binding site" evidence="1">
    <location>
        <position position="342"/>
    </location>
    <ligand>
        <name>Ca(2+)</name>
        <dbReference type="ChEBI" id="CHEBI:29108"/>
    </ligand>
</feature>
<feature type="binding site" evidence="1">
    <location>
        <position position="369"/>
    </location>
    <ligand>
        <name>pyrroloquinoline quinone</name>
        <dbReference type="ChEBI" id="CHEBI:58442"/>
    </ligand>
</feature>
<feature type="binding site" evidence="1">
    <location>
        <position position="588"/>
    </location>
    <ligand>
        <name>pyrroloquinoline quinone</name>
        <dbReference type="ChEBI" id="CHEBI:58442"/>
    </ligand>
</feature>
<feature type="binding site" description="covalent" evidence="1">
    <location>
        <position position="653"/>
    </location>
    <ligand>
        <name>heme c</name>
        <dbReference type="ChEBI" id="CHEBI:61717"/>
    </ligand>
</feature>
<feature type="binding site" description="covalent" evidence="1">
    <location>
        <position position="656"/>
    </location>
    <ligand>
        <name>heme c</name>
        <dbReference type="ChEBI" id="CHEBI:61717"/>
    </ligand>
</feature>
<feature type="binding site" description="axial binding residue" evidence="1">
    <location>
        <position position="657"/>
    </location>
    <ligand>
        <name>heme c</name>
        <dbReference type="ChEBI" id="CHEBI:61717"/>
    </ligand>
    <ligandPart>
        <name>Fe</name>
        <dbReference type="ChEBI" id="CHEBI:18248"/>
    </ligandPart>
</feature>
<feature type="binding site" description="axial binding residue" evidence="1">
    <location>
        <position position="696"/>
    </location>
    <ligand>
        <name>heme c</name>
        <dbReference type="ChEBI" id="CHEBI:61717"/>
    </ligand>
    <ligandPart>
        <name>Fe</name>
        <dbReference type="ChEBI" id="CHEBI:18248"/>
    </ligandPart>
</feature>
<feature type="modified residue" description="Pyrrolidone carboxylic acid" evidence="8">
    <location>
        <position position="35"/>
    </location>
</feature>
<feature type="disulfide bond" evidence="1">
    <location>
        <begin position="141"/>
        <end position="142"/>
    </location>
</feature>
<feature type="sequence conflict" description="In Ref. 1; BAA19753." evidence="13" ref="1">
    <original>G</original>
    <variation>S</variation>
    <location>
        <position position="230"/>
    </location>
</feature>
<feature type="sequence conflict" description="In Ref. 1; BAA19753." evidence="13" ref="1">
    <original>A</original>
    <variation>R</variation>
    <location>
        <position position="675"/>
    </location>
</feature>
<sequence length="757" mass="82853">MTSGLLTPIKVTKKRLLSCAAALAFSAAVPVAFAQEDTGTAITSSDNGGHPGDWLSYGRSYSEQRYSPLDQINTENVGKLKLAWHYDLDTNRGQEGTPLIVNGVMYATTNWSKMKALDAATGKLLWSYDPKVPGNIADRGCCDTVSRGAAYWNGKVYFGTFDGRLIALDAKTGKLVWSVYTIPKEAQLGHQRSYTVDGAPRIAKGKVLIGNGGAEFGARGFVSAFDAETGKLDWRFFTVPNPENKPDGAASDDILMSKAYPTWGKNGAWKQQGGGGTVWDSLVYDPVTDLVYLGVGNGSPWNYKFRSEGKGDNLFLGSIVAINPDTGKYVWHFQETPMDEWDYTSVQQIMTLDMPVNGEMRHVIVHAPKNGFFYIIDAKTGKFITGKPYTYENWANGLDPVTGRPNYVPDALWTLTGKPWLGIPGELGGHNFAAMAYSPKTKLVYIPAQQIPLLYDGQKGGFKAYHDAWNLGLDMNKIGLFDDNDPEHVAAKKDFLKVLKGWTVAWDPEKMAPAFTINHKGPWNGGLLATAGNVIFQGLANGEFHAYDATNGNDLYSFPAQSAIIAPPVTYTANGKQYVAVEVGWGGIYPFLYGGVARTSGWTVNHSRVIAFSLDGKDSLPPKNELGFTPVKPVPTYDEARQKDGYFMYQTFCSACHGDNAISGGVLPDLRWSGAPRGRESFYKLVGRGALTAYGMDRFDTSMTPEQIEDIRNFIVKRANESYDDEVKARENSTGVPNDQFLNVPQSTADVPTADHP</sequence>
<comment type="function">
    <text evidence="4 5 6 7 9 16">Dehydrogenase component of the alcohol dehydrogenase multicomponent enzyme system which is involved in the production of acetic acid and in the ethanol oxidase respiratory chain. Quinohemoprotein alcohol dehydrogenase (ADH) catalyzes the oxidation of ethanol to acetaldehyde by transferring electrons to the ubiquinone embedded in the membrane phospholipids (PubMed:1646200, PubMed:18838797, PubMed:7592433, PubMed:8617755, PubMed:9878716). The electrons transfer from ethanol to membranous ubiquinone occurs from pyrroloquinoline quinone (PQQ) to one heme c in subunit I (AdhA), and finally to two heme c in subunit II (AdhB) (PubMed:18838797, PubMed:8617755, PubMed:9878716). Besides ubiquinone reduction, ADH also has a ubiquinol (QH2) oxidation reaction which mediates electron transfer from ubiquinol to the non-energy generating bypass oxidase system (PubMed:9878716). The electrons transfer occurs from ubiquinol (QH2) to the additional heme c within subunit II (AdhB) (PubMed:8617755, PubMed:9878716). Also able to use quinone analogs such as 2,3-dimethoxy-5-methyl-6-n-decyl-1,4-benzoquinone (DB) and 2,3-dimethoxy-5-methyl-6-n-pentyl-1,4-benzoquinone (PB) (PubMed:9878716).</text>
</comment>
<comment type="catalytic activity">
    <reaction evidence="6 7 9">
        <text>ethanol + a ubiquinone = a ubiquinol + acetaldehyde</text>
        <dbReference type="Rhea" id="RHEA:26442"/>
        <dbReference type="Rhea" id="RHEA-COMP:9565"/>
        <dbReference type="Rhea" id="RHEA-COMP:9566"/>
        <dbReference type="ChEBI" id="CHEBI:15343"/>
        <dbReference type="ChEBI" id="CHEBI:16236"/>
        <dbReference type="ChEBI" id="CHEBI:16389"/>
        <dbReference type="ChEBI" id="CHEBI:17976"/>
        <dbReference type="EC" id="1.1.5.5"/>
    </reaction>
</comment>
<comment type="cofactor">
    <cofactor evidence="7 16">
        <name>pyrroloquinoline quinone</name>
        <dbReference type="ChEBI" id="CHEBI:58442"/>
    </cofactor>
    <text evidence="7">Binds 1 PQQ group per subunit.</text>
</comment>
<comment type="cofactor">
    <cofactor evidence="15">
        <name>Ca(2+)</name>
        <dbReference type="ChEBI" id="CHEBI:29108"/>
    </cofactor>
    <text evidence="1">Binds 1 Ca(2+) ion per subunit.</text>
</comment>
<comment type="cofactor">
    <cofactor evidence="7 16">
        <name>heme c</name>
        <dbReference type="ChEBI" id="CHEBI:61717"/>
    </cofactor>
    <text evidence="7">Binds 1 heme c group covalently per subunit.</text>
</comment>
<comment type="activity regulation">
    <text evidence="9">2,6-dichloro-4-dicyanovinylphenol (PC16) and antimycin A inhibit ubiquinol oxidation activity more selectively than the ubiquinone reductase activity.</text>
</comment>
<comment type="biophysicochemical properties">
    <kinetics>
        <KM evidence="9">7.7 uM for ubiquinone-2 (for ubiquinone reduction activity in inactive ADH at pH 5)</KM>
        <KM evidence="9">8.4 uM for ubiquinone-2 (for ubiquinone reduction activity in active ADH at pH 5)</KM>
        <KM evidence="9">13 uM for ubiquinol-2 (for ubiquinol oxidation activity in inactive ADH at pH 5)</KM>
        <KM evidence="7">32 uM for ethanol (for ubiquinone reduction activity in active ADH at pH 4.5)</KM>
        <KM evidence="9">36 uM for ubiquinol-2 (for ubiquinol oxidation activity in active ADH at pH 5)</KM>
        <KM evidence="7">40 uM for ethanol (for ubiquinone reduction activity in inactive ADH at pH 4.5)</KM>
        <KM evidence="9">170 uM for ferricyanide (for ubiquinol oxidation activity in active ADH at pH 5)</KM>
        <KM evidence="9">200 uM for ferricyanide (for ubiquinol oxidation activity in inactive ADH at pH 5)</KM>
        <Vmax evidence="9">175.0 umol/min/mg enzyme toward ubiquinol-2 (for ubiquinol oxidation activity in inactive ADH at pH 5)</Vmax>
        <Vmax evidence="9">167.0 umol/min/mg enzyme toward ferricyanide (for ubiquinol oxidation activity in inactive ADH at pH 5)</Vmax>
        <Vmax evidence="9">104.0 umol/min/mg enzyme toward ubiquinol-2 (for ubiquinol oxidation activity in active ADH at pH 5)</Vmax>
        <Vmax evidence="9">81.0 umol/min/mg enzyme toward ferricyanide (for ubiquinol oxidation activity in active ADH at pH 5)</Vmax>
        <Vmax evidence="7">71.0 umol/min/mg enzyme toward ethanol (for ubiquinone reduction activity in active ADH at pH 4.5)</Vmax>
        <Vmax evidence="9">54.0 umol/min/mg enzyme toward ubiquinone-2 (for ubiquinone reduction activity in active ADH at pH 5)</Vmax>
        <Vmax evidence="7">7.1 umol/min/mg enzyme toward ethanol (for ubiquinone reduction activity in inactive ADH at pH 4.5)</Vmax>
        <Vmax evidence="9">2.0 umol/min/mg enzyme toward ubiquinone-2 (for ubiquinone reduction activity in inactive ADH at pH 5)</Vmax>
    </kinetics>
    <phDependence>
        <text evidence="9">Optimum pH is 5 for ubiquinol oxidation activity.</text>
    </phDependence>
</comment>
<comment type="subunit">
    <text evidence="7 17">The alcohol dehydrogenase multicomponent enzyme system is composed of a dehydrogenase subunit I (AdhA), a cytochrome c subunit II (AdhB) and a subunit III (AdhS).</text>
</comment>
<comment type="subcellular location">
    <subcellularLocation>
        <location evidence="13">Cell membrane</location>
        <topology evidence="13">Peripheral membrane protein</topology>
        <orientation evidence="13">Periplasmic side</orientation>
    </subcellularLocation>
</comment>
<comment type="induction">
    <text evidence="14">Constitutively expressed.</text>
</comment>
<comment type="miscellaneous">
    <text evidence="6 7 9">Inactive ADH is produced under conditions of low pH and high aeration, where the bypass oxidase activity is highly elevated. In spite of having 10 times less enzyme activity than active ADH, inactive ADH is not distinguished from active ADH with respect to their subunit compositions, molecular sizes and prosthetic groups. It seems that in inactive ADH, an improper interaction between subunit II and subunit I/III complex impairs efficient intersubunit electron transport in the ADH complex.</text>
</comment>
<comment type="similarity">
    <text evidence="13">Belongs to the bacterial PQQ dehydrogenase family.</text>
</comment>
<reference key="1">
    <citation type="journal article" date="1997" name="Appl. Environ. Microbiol.">
        <title>Characterization of the genes encoding the three-component membrane-bound alcohol dehydrogenase from Gluconobacter suboxydans and their expression in Acetobacter pasteurianus.</title>
        <authorList>
            <person name="Kondo K."/>
            <person name="Horinouchi S."/>
        </authorList>
    </citation>
    <scope>NUCLEOTIDE SEQUENCE [GENOMIC DNA]</scope>
    <scope>PROTEIN SEQUENCE OF 35-50</scope>
    <scope>FUNCTION</scope>
    <scope>PYROGLUTAMATE FORMATION AT GLN-35</scope>
    <scope>COFACTOR</scope>
    <source>
        <strain>ATCC 621 / DSM 50049 / NBRC 3172 / NCIMB 7069 / NRRL B-72</strain>
    </source>
</reference>
<reference key="2">
    <citation type="journal article" date="2005" name="Nat. Biotechnol.">
        <title>Complete genome sequence of the acetic acid bacterium Gluconobacter oxydans.</title>
        <authorList>
            <person name="Prust C."/>
            <person name="Hoffmeister M."/>
            <person name="Liesegang H."/>
            <person name="Wiezer A."/>
            <person name="Fricke W.F."/>
            <person name="Ehrenreich A."/>
            <person name="Gottschalk G."/>
            <person name="Deppenmeier U."/>
        </authorList>
    </citation>
    <scope>NUCLEOTIDE SEQUENCE [LARGE SCALE GENOMIC DNA]</scope>
    <source>
        <strain>621H</strain>
    </source>
</reference>
<reference key="3">
    <citation type="journal article" date="1991" name="J. Bacteriol.">
        <title>Reconstitution of the ethanol oxidase respiratory chain in membranes of quinoprotein alcohol dehydrogenase-deficient Gluconobacter suboxydans subsp. alpha strains.</title>
        <authorList>
            <person name="Matsushita K."/>
            <person name="Nagatani Y."/>
            <person name="Shinagawa E."/>
            <person name="Adachi O."/>
            <person name="Ameyama M."/>
        </authorList>
    </citation>
    <scope>FUNCTION</scope>
</reference>
<reference key="4">
    <citation type="journal article" date="1995" name="J. Bacteriol.">
        <title>Generation mechanism and purification of an inactive form convertible in vivo to the active form of quinoprotein alcohol dehydrogenase in Gluconobacter suboxydans.</title>
        <authorList>
            <person name="Matsushita K."/>
            <person name="Yakushi T."/>
            <person name="Takaki Y."/>
            <person name="Toyama H."/>
            <person name="Adachi O."/>
        </authorList>
    </citation>
    <scope>FUNCTION</scope>
    <scope>CATALYTIC ACTIVITY</scope>
    <scope>INDUCTION</scope>
</reference>
<reference key="5">
    <citation type="journal article" date="1996" name="J. Biol. Chem.">
        <title>Function of multiple heme c moieties in intramolecular electron transport and ubiquinone reduction in the quinohemoprotein alcohol dehydrogenase-cytochrome c complex of Gluconobacter suboxydans.</title>
        <authorList>
            <person name="Matsushita K."/>
            <person name="Yakushi T."/>
            <person name="Toyama H."/>
            <person name="Shinagawa E."/>
            <person name="Adachi O."/>
        </authorList>
    </citation>
    <scope>FUNCTION</scope>
    <scope>CATALYTIC ACTIVITY</scope>
    <scope>BIOPHYSICOCHEMICAL PROPERTIES</scope>
    <scope>COFACTOR</scope>
    <scope>SUBUNIT</scope>
</reference>
<reference key="6">
    <citation type="journal article" date="1999" name="Biochim. Biophys. Acta">
        <title>The quinohemoprotein alcohol dehydrogenase of Gluconobacter suboxydans has ubiquinol oxidation activity at a site different from the ubiquinone reduction site.</title>
        <authorList>
            <person name="Matsushita K."/>
            <person name="Yakushi T."/>
            <person name="Toyama H."/>
            <person name="Adachi O."/>
            <person name="Miyoshi H."/>
            <person name="Tagami E."/>
            <person name="Sakamoto K."/>
        </authorList>
    </citation>
    <scope>FUNCTION</scope>
    <scope>CATALYTIC ACTIVITY</scope>
    <scope>BIOPHYSICOCHEMICAL PROPERTIES</scope>
    <scope>ACTIVITY REGULATION</scope>
    <scope>SUBSTRATE SPECIFICITY</scope>
    <scope>SUBUNIT</scope>
</reference>
<reference key="7">
    <citation type="journal article" date="2008" name="Biosci. Biotechnol. Biochem.">
        <title>A tightly bound quinone functions in the ubiquinone reaction sites of quinoprotein alcohol dehydrogenase of an acetic acid bacterium, Gluconobacter suboxydans.</title>
        <authorList>
            <person name="Matsushita K."/>
            <person name="Kobayashi Y."/>
            <person name="Mizuguchi M."/>
            <person name="Toyama H."/>
            <person name="Adachi O."/>
            <person name="Sakamoto K."/>
            <person name="Miyoshi H."/>
        </authorList>
    </citation>
    <scope>FUNCTION</scope>
</reference>
<accession>O05542</accession>
<accession>Q5FS09</accession>